<evidence type="ECO:0000305" key="1"/>
<evidence type="ECO:0000305" key="2">
    <source>
    </source>
</evidence>
<organism>
    <name type="scientific">Saccharomyces cerevisiae (strain ATCC 204508 / S288c)</name>
    <name type="common">Baker's yeast</name>
    <dbReference type="NCBI Taxonomy" id="559292"/>
    <lineage>
        <taxon>Eukaryota</taxon>
        <taxon>Fungi</taxon>
        <taxon>Dikarya</taxon>
        <taxon>Ascomycota</taxon>
        <taxon>Saccharomycotina</taxon>
        <taxon>Saccharomycetes</taxon>
        <taxon>Saccharomycetales</taxon>
        <taxon>Saccharomycetaceae</taxon>
        <taxon>Saccharomyces</taxon>
    </lineage>
</organism>
<name>YB06A_YEAST</name>
<dbReference type="EMBL" id="Z35767">
    <property type="status" value="NOT_ANNOTATED_CDS"/>
    <property type="molecule type" value="Genomic_DNA"/>
</dbReference>
<dbReference type="EMBL" id="AF479932">
    <property type="protein sequence ID" value="AAL79245.1"/>
    <property type="status" value="ALT_FRAME"/>
    <property type="molecule type" value="Genomic_DNA"/>
</dbReference>
<dbReference type="STRING" id="4932.YBL006W-A"/>
<dbReference type="PaxDb" id="4932-YBL006W-A"/>
<dbReference type="EnsemblFungi" id="YBL006W-A_mRNA">
    <property type="protein sequence ID" value="YBL006W-A"/>
    <property type="gene ID" value="YBL006W-A"/>
</dbReference>
<dbReference type="AGR" id="SGD:S000028596"/>
<dbReference type="SGD" id="S000028596">
    <property type="gene designation" value="YBL006W-A"/>
</dbReference>
<dbReference type="HOGENOM" id="CLU_3144073_0_0_1"/>
<sequence length="49" mass="5640">MCDWKGRDNCPAPARKTSCVSRAALHSNVRWKWCEKSTLDRASNCWRGT</sequence>
<proteinExistence type="uncertain"/>
<comment type="miscellaneous">
    <text evidence="1">Completely overlaps LDB7.</text>
</comment>
<comment type="caution">
    <text evidence="2">Product of a dubious gene prediction unlikely to encode a functional protein. Because of that it is not part of the S.cerevisiae S288c complete/reference proteome set.</text>
</comment>
<comment type="sequence caution" evidence="1">
    <conflict type="frameshift">
        <sequence resource="EMBL-CDS" id="AAL79245"/>
    </conflict>
</comment>
<comment type="sequence caution" evidence="1">
    <conflict type="frameshift">
        <sequence resource="EMBL" id="Z35767"/>
    </conflict>
</comment>
<accession>Q8TGQ6</accession>
<gene>
    <name type="ordered locus">YBL006W-A</name>
</gene>
<protein>
    <recommendedName>
        <fullName>Putative uncharacterized protein YBL006W-A</fullName>
    </recommendedName>
</protein>
<feature type="chain" id="PRO_0000299792" description="Putative uncharacterized protein YBL006W-A">
    <location>
        <begin position="1"/>
        <end position="49"/>
    </location>
</feature>
<reference key="1">
    <citation type="journal article" date="1994" name="EMBO J.">
        <title>Complete DNA sequence of yeast chromosome II.</title>
        <authorList>
            <person name="Feldmann H."/>
            <person name="Aigle M."/>
            <person name="Aljinovic G."/>
            <person name="Andre B."/>
            <person name="Baclet M.C."/>
            <person name="Barthe C."/>
            <person name="Baur A."/>
            <person name="Becam A.-M."/>
            <person name="Biteau N."/>
            <person name="Boles E."/>
            <person name="Brandt T."/>
            <person name="Brendel M."/>
            <person name="Brueckner M."/>
            <person name="Bussereau F."/>
            <person name="Christiansen C."/>
            <person name="Contreras R."/>
            <person name="Crouzet M."/>
            <person name="Cziepluch C."/>
            <person name="Demolis N."/>
            <person name="Delaveau T."/>
            <person name="Doignon F."/>
            <person name="Domdey H."/>
            <person name="Duesterhus S."/>
            <person name="Dubois E."/>
            <person name="Dujon B."/>
            <person name="El Bakkoury M."/>
            <person name="Entian K.-D."/>
            <person name="Feuermann M."/>
            <person name="Fiers W."/>
            <person name="Fobo G.M."/>
            <person name="Fritz C."/>
            <person name="Gassenhuber J."/>
            <person name="Glansdorff N."/>
            <person name="Goffeau A."/>
            <person name="Grivell L.A."/>
            <person name="de Haan M."/>
            <person name="Hein C."/>
            <person name="Herbert C.J."/>
            <person name="Hollenberg C.P."/>
            <person name="Holmstroem K."/>
            <person name="Jacq C."/>
            <person name="Jacquet M."/>
            <person name="Jauniaux J.-C."/>
            <person name="Jonniaux J.-L."/>
            <person name="Kallesoee T."/>
            <person name="Kiesau P."/>
            <person name="Kirchrath L."/>
            <person name="Koetter P."/>
            <person name="Korol S."/>
            <person name="Liebl S."/>
            <person name="Logghe M."/>
            <person name="Lohan A.J.E."/>
            <person name="Louis E.J."/>
            <person name="Li Z.Y."/>
            <person name="Maat M.J."/>
            <person name="Mallet L."/>
            <person name="Mannhaupt G."/>
            <person name="Messenguy F."/>
            <person name="Miosga T."/>
            <person name="Molemans F."/>
            <person name="Mueller S."/>
            <person name="Nasr F."/>
            <person name="Obermaier B."/>
            <person name="Perea J."/>
            <person name="Pierard A."/>
            <person name="Piravandi E."/>
            <person name="Pohl F.M."/>
            <person name="Pohl T.M."/>
            <person name="Potier S."/>
            <person name="Proft M."/>
            <person name="Purnelle B."/>
            <person name="Ramezani Rad M."/>
            <person name="Rieger M."/>
            <person name="Rose M."/>
            <person name="Schaaff-Gerstenschlaeger I."/>
            <person name="Scherens B."/>
            <person name="Schwarzlose C."/>
            <person name="Skala J."/>
            <person name="Slonimski P.P."/>
            <person name="Smits P.H.M."/>
            <person name="Souciet J.-L."/>
            <person name="Steensma H.Y."/>
            <person name="Stucka R."/>
            <person name="Urrestarazu L.A."/>
            <person name="van der Aart Q.J.M."/>
            <person name="Van Dyck L."/>
            <person name="Vassarotti A."/>
            <person name="Vetter I."/>
            <person name="Vierendeels F."/>
            <person name="Vissers S."/>
            <person name="Wagner G."/>
            <person name="de Wergifosse P."/>
            <person name="Wolfe K.H."/>
            <person name="Zagulski M."/>
            <person name="Zimmermann F.K."/>
            <person name="Mewes H.-W."/>
            <person name="Kleine K."/>
        </authorList>
    </citation>
    <scope>NUCLEOTIDE SEQUENCE [LARGE SCALE GENOMIC DNA]</scope>
    <source>
        <strain>ATCC 204508 / S288c</strain>
    </source>
</reference>
<reference key="2">
    <citation type="journal article" date="2014" name="G3 (Bethesda)">
        <title>The reference genome sequence of Saccharomyces cerevisiae: Then and now.</title>
        <authorList>
            <person name="Engel S.R."/>
            <person name="Dietrich F.S."/>
            <person name="Fisk D.G."/>
            <person name="Binkley G."/>
            <person name="Balakrishnan R."/>
            <person name="Costanzo M.C."/>
            <person name="Dwight S.S."/>
            <person name="Hitz B.C."/>
            <person name="Karra K."/>
            <person name="Nash R.S."/>
            <person name="Weng S."/>
            <person name="Wong E.D."/>
            <person name="Lloyd P."/>
            <person name="Skrzypek M.S."/>
            <person name="Miyasato S.R."/>
            <person name="Simison M."/>
            <person name="Cherry J.M."/>
        </authorList>
    </citation>
    <scope>GENOME REANNOTATION</scope>
    <source>
        <strain>ATCC 204508 / S288c</strain>
    </source>
</reference>
<reference key="3">
    <citation type="journal article" date="2002" name="Nat. Biotechnol.">
        <title>An integrated approach for finding overlooked genes in yeast.</title>
        <authorList>
            <person name="Kumar A."/>
            <person name="Harrison P.M."/>
            <person name="Cheung K.-H."/>
            <person name="Lan N."/>
            <person name="Echols N."/>
            <person name="Bertone P."/>
            <person name="Miller P."/>
            <person name="Gerstein M.B."/>
            <person name="Snyder M."/>
        </authorList>
    </citation>
    <scope>NUCLEOTIDE SEQUENCE [GENOMIC DNA] OF 1-39</scope>
</reference>
<reference key="4">
    <citation type="journal article" date="2003" name="Nature">
        <title>Sequencing and comparison of yeast species to identify genes and regulatory elements.</title>
        <authorList>
            <person name="Kellis M."/>
            <person name="Patterson N."/>
            <person name="Endrizzi M."/>
            <person name="Birren B.W."/>
            <person name="Lander E.S."/>
        </authorList>
    </citation>
    <scope>IDENTIFICATION OF FRAMESHIFT</scope>
</reference>